<dbReference type="EC" id="3.13.2.1" evidence="1"/>
<dbReference type="EMBL" id="CP000548">
    <property type="protein sequence ID" value="ABO05463.1"/>
    <property type="molecule type" value="Genomic_DNA"/>
</dbReference>
<dbReference type="RefSeq" id="WP_004198634.1">
    <property type="nucleotide sequence ID" value="NZ_CP007802.1"/>
</dbReference>
<dbReference type="SMR" id="A3MQW7"/>
<dbReference type="GeneID" id="93061911"/>
<dbReference type="KEGG" id="bmaz:BM44_227"/>
<dbReference type="KEGG" id="bmn:BMA10247_3134"/>
<dbReference type="PATRIC" id="fig|320389.8.peg.245"/>
<dbReference type="UniPathway" id="UPA00314">
    <property type="reaction ID" value="UER00076"/>
</dbReference>
<dbReference type="GO" id="GO:0005829">
    <property type="term" value="C:cytosol"/>
    <property type="evidence" value="ECO:0007669"/>
    <property type="project" value="TreeGrafter"/>
</dbReference>
<dbReference type="GO" id="GO:0004013">
    <property type="term" value="F:adenosylhomocysteinase activity"/>
    <property type="evidence" value="ECO:0007669"/>
    <property type="project" value="UniProtKB-UniRule"/>
</dbReference>
<dbReference type="GO" id="GO:0071269">
    <property type="term" value="P:L-homocysteine biosynthetic process"/>
    <property type="evidence" value="ECO:0007669"/>
    <property type="project" value="UniProtKB-UniRule"/>
</dbReference>
<dbReference type="GO" id="GO:0006730">
    <property type="term" value="P:one-carbon metabolic process"/>
    <property type="evidence" value="ECO:0007669"/>
    <property type="project" value="UniProtKB-KW"/>
</dbReference>
<dbReference type="GO" id="GO:0033353">
    <property type="term" value="P:S-adenosylmethionine cycle"/>
    <property type="evidence" value="ECO:0007669"/>
    <property type="project" value="TreeGrafter"/>
</dbReference>
<dbReference type="CDD" id="cd00401">
    <property type="entry name" value="SAHH"/>
    <property type="match status" value="1"/>
</dbReference>
<dbReference type="FunFam" id="3.40.50.720:FF:000004">
    <property type="entry name" value="Adenosylhomocysteinase"/>
    <property type="match status" value="1"/>
</dbReference>
<dbReference type="Gene3D" id="3.40.50.1480">
    <property type="entry name" value="Adenosylhomocysteinase-like"/>
    <property type="match status" value="1"/>
</dbReference>
<dbReference type="Gene3D" id="3.40.50.720">
    <property type="entry name" value="NAD(P)-binding Rossmann-like Domain"/>
    <property type="match status" value="1"/>
</dbReference>
<dbReference type="HAMAP" id="MF_00563">
    <property type="entry name" value="AdoHcyase"/>
    <property type="match status" value="1"/>
</dbReference>
<dbReference type="InterPro" id="IPR042172">
    <property type="entry name" value="Adenosylhomocyst_ase-like_sf"/>
</dbReference>
<dbReference type="InterPro" id="IPR000043">
    <property type="entry name" value="Adenosylhomocysteinase-like"/>
</dbReference>
<dbReference type="InterPro" id="IPR015878">
    <property type="entry name" value="Ado_hCys_hydrolase_NAD-bd"/>
</dbReference>
<dbReference type="InterPro" id="IPR036291">
    <property type="entry name" value="NAD(P)-bd_dom_sf"/>
</dbReference>
<dbReference type="InterPro" id="IPR020082">
    <property type="entry name" value="S-Ado-L-homoCys_hydrolase_CS"/>
</dbReference>
<dbReference type="NCBIfam" id="TIGR00936">
    <property type="entry name" value="ahcY"/>
    <property type="match status" value="1"/>
</dbReference>
<dbReference type="NCBIfam" id="NF004005">
    <property type="entry name" value="PRK05476.2-3"/>
    <property type="match status" value="1"/>
</dbReference>
<dbReference type="PANTHER" id="PTHR23420">
    <property type="entry name" value="ADENOSYLHOMOCYSTEINASE"/>
    <property type="match status" value="1"/>
</dbReference>
<dbReference type="PANTHER" id="PTHR23420:SF0">
    <property type="entry name" value="ADENOSYLHOMOCYSTEINASE"/>
    <property type="match status" value="1"/>
</dbReference>
<dbReference type="Pfam" id="PF05221">
    <property type="entry name" value="AdoHcyase"/>
    <property type="match status" value="1"/>
</dbReference>
<dbReference type="Pfam" id="PF00670">
    <property type="entry name" value="AdoHcyase_NAD"/>
    <property type="match status" value="1"/>
</dbReference>
<dbReference type="PIRSF" id="PIRSF001109">
    <property type="entry name" value="Ad_hcy_hydrolase"/>
    <property type="match status" value="1"/>
</dbReference>
<dbReference type="SMART" id="SM00996">
    <property type="entry name" value="AdoHcyase"/>
    <property type="match status" value="1"/>
</dbReference>
<dbReference type="SMART" id="SM00997">
    <property type="entry name" value="AdoHcyase_NAD"/>
    <property type="match status" value="1"/>
</dbReference>
<dbReference type="SUPFAM" id="SSF52283">
    <property type="entry name" value="Formate/glycerate dehydrogenase catalytic domain-like"/>
    <property type="match status" value="1"/>
</dbReference>
<dbReference type="SUPFAM" id="SSF51735">
    <property type="entry name" value="NAD(P)-binding Rossmann-fold domains"/>
    <property type="match status" value="1"/>
</dbReference>
<dbReference type="PROSITE" id="PS00738">
    <property type="entry name" value="ADOHCYASE_1"/>
    <property type="match status" value="1"/>
</dbReference>
<dbReference type="PROSITE" id="PS00739">
    <property type="entry name" value="ADOHCYASE_2"/>
    <property type="match status" value="1"/>
</dbReference>
<feature type="chain" id="PRO_1000024714" description="Adenosylhomocysteinase">
    <location>
        <begin position="1"/>
        <end position="473"/>
    </location>
</feature>
<feature type="binding site" evidence="1">
    <location>
        <position position="64"/>
    </location>
    <ligand>
        <name>substrate</name>
    </ligand>
</feature>
<feature type="binding site" evidence="1">
    <location>
        <position position="139"/>
    </location>
    <ligand>
        <name>substrate</name>
    </ligand>
</feature>
<feature type="binding site" evidence="1">
    <location>
        <position position="199"/>
    </location>
    <ligand>
        <name>substrate</name>
    </ligand>
</feature>
<feature type="binding site" evidence="1">
    <location>
        <begin position="200"/>
        <end position="202"/>
    </location>
    <ligand>
        <name>NAD(+)</name>
        <dbReference type="ChEBI" id="CHEBI:57540"/>
    </ligand>
</feature>
<feature type="binding site" evidence="1">
    <location>
        <position position="229"/>
    </location>
    <ligand>
        <name>substrate</name>
    </ligand>
</feature>
<feature type="binding site" evidence="1">
    <location>
        <position position="233"/>
    </location>
    <ligand>
        <name>substrate</name>
    </ligand>
</feature>
<feature type="binding site" evidence="1">
    <location>
        <position position="234"/>
    </location>
    <ligand>
        <name>NAD(+)</name>
        <dbReference type="ChEBI" id="CHEBI:57540"/>
    </ligand>
</feature>
<feature type="binding site" evidence="1">
    <location>
        <begin position="263"/>
        <end position="268"/>
    </location>
    <ligand>
        <name>NAD(+)</name>
        <dbReference type="ChEBI" id="CHEBI:57540"/>
    </ligand>
</feature>
<feature type="binding site" evidence="1">
    <location>
        <position position="286"/>
    </location>
    <ligand>
        <name>NAD(+)</name>
        <dbReference type="ChEBI" id="CHEBI:57540"/>
    </ligand>
</feature>
<feature type="binding site" evidence="1">
    <location>
        <position position="321"/>
    </location>
    <ligand>
        <name>NAD(+)</name>
        <dbReference type="ChEBI" id="CHEBI:57540"/>
    </ligand>
</feature>
<feature type="binding site" evidence="1">
    <location>
        <begin position="342"/>
        <end position="344"/>
    </location>
    <ligand>
        <name>NAD(+)</name>
        <dbReference type="ChEBI" id="CHEBI:57540"/>
    </ligand>
</feature>
<feature type="binding site" evidence="1">
    <location>
        <position position="387"/>
    </location>
    <ligand>
        <name>NAD(+)</name>
        <dbReference type="ChEBI" id="CHEBI:57540"/>
    </ligand>
</feature>
<comment type="function">
    <text evidence="1">May play a key role in the regulation of the intracellular concentration of adenosylhomocysteine.</text>
</comment>
<comment type="catalytic activity">
    <reaction evidence="1">
        <text>S-adenosyl-L-homocysteine + H2O = L-homocysteine + adenosine</text>
        <dbReference type="Rhea" id="RHEA:21708"/>
        <dbReference type="ChEBI" id="CHEBI:15377"/>
        <dbReference type="ChEBI" id="CHEBI:16335"/>
        <dbReference type="ChEBI" id="CHEBI:57856"/>
        <dbReference type="ChEBI" id="CHEBI:58199"/>
        <dbReference type="EC" id="3.13.2.1"/>
    </reaction>
</comment>
<comment type="cofactor">
    <cofactor evidence="1">
        <name>NAD(+)</name>
        <dbReference type="ChEBI" id="CHEBI:57540"/>
    </cofactor>
    <text evidence="1">Binds 1 NAD(+) per subunit.</text>
</comment>
<comment type="pathway">
    <text evidence="1">Amino-acid biosynthesis; L-homocysteine biosynthesis; L-homocysteine from S-adenosyl-L-homocysteine: step 1/1.</text>
</comment>
<comment type="subcellular location">
    <subcellularLocation>
        <location evidence="1">Cytoplasm</location>
    </subcellularLocation>
</comment>
<comment type="similarity">
    <text evidence="1">Belongs to the adenosylhomocysteinase family.</text>
</comment>
<protein>
    <recommendedName>
        <fullName evidence="1">Adenosylhomocysteinase</fullName>
        <ecNumber evidence="1">3.13.2.1</ecNumber>
    </recommendedName>
    <alternativeName>
        <fullName evidence="1">S-adenosyl-L-homocysteine hydrolase</fullName>
        <shortName evidence="1">AdoHcyase</shortName>
    </alternativeName>
</protein>
<reference key="1">
    <citation type="journal article" date="2010" name="Genome Biol. Evol.">
        <title>Continuing evolution of Burkholderia mallei through genome reduction and large-scale rearrangements.</title>
        <authorList>
            <person name="Losada L."/>
            <person name="Ronning C.M."/>
            <person name="DeShazer D."/>
            <person name="Woods D."/>
            <person name="Fedorova N."/>
            <person name="Kim H.S."/>
            <person name="Shabalina S.A."/>
            <person name="Pearson T.R."/>
            <person name="Brinkac L."/>
            <person name="Tan P."/>
            <person name="Nandi T."/>
            <person name="Crabtree J."/>
            <person name="Badger J."/>
            <person name="Beckstrom-Sternberg S."/>
            <person name="Saqib M."/>
            <person name="Schutzer S.E."/>
            <person name="Keim P."/>
            <person name="Nierman W.C."/>
        </authorList>
    </citation>
    <scope>NUCLEOTIDE SEQUENCE [LARGE SCALE GENOMIC DNA]</scope>
    <source>
        <strain>NCTC 10247</strain>
    </source>
</reference>
<proteinExistence type="inferred from homology"/>
<accession>A3MQW7</accession>
<evidence type="ECO:0000255" key="1">
    <source>
        <dbReference type="HAMAP-Rule" id="MF_00563"/>
    </source>
</evidence>
<keyword id="KW-0963">Cytoplasm</keyword>
<keyword id="KW-0378">Hydrolase</keyword>
<keyword id="KW-0520">NAD</keyword>
<keyword id="KW-0554">One-carbon metabolism</keyword>
<organism>
    <name type="scientific">Burkholderia mallei (strain NCTC 10247)</name>
    <dbReference type="NCBI Taxonomy" id="320389"/>
    <lineage>
        <taxon>Bacteria</taxon>
        <taxon>Pseudomonadati</taxon>
        <taxon>Pseudomonadota</taxon>
        <taxon>Betaproteobacteria</taxon>
        <taxon>Burkholderiales</taxon>
        <taxon>Burkholderiaceae</taxon>
        <taxon>Burkholderia</taxon>
        <taxon>pseudomallei group</taxon>
    </lineage>
</organism>
<name>SAHH_BURM7</name>
<sequence>MNAAVIDSHSAQDYVVADIALAGWGRKELNIAETEMPGLVQIRDEYKAQQPLKGARIAGSLHMTIQTGVLIETLKALGADVRWASCNIFSTQDHAAAAIVEAGTPVFAFKGESLDEYWEFSHRIFEWPNGEFANMILDDGGDATLLLILGSKAEKDRSVIARPTNEEEVALFKSIERHLEIDGSWYSKRLAHIKGVTEETTTGVHRLYQMEKDGRLPFPAFNVNDSVTKSKFDNLYGCRESLVDGIKRATDVMIAGKIAVVAGYGDVGKGCAQSLRGLGATVWVTEIDPICALQAAMEGYRVVTMEYAADKADIFVTATGNYHVINHDHMKAMRHNAIVCNIGHFDSEIDVASTRQYQWENIKPQVDHIIFPDGKRVILLAEGRLVNLGCATGHPSFVMSNSFTNQTLAQIELFTRGGEYANKVYVLPKHLDEKVARLHLARIGAQLSELSDDQAAYIGVSKAGPFKPDHYRY</sequence>
<gene>
    <name evidence="1" type="primary">ahcY</name>
    <name type="ordered locus">BMA10247_3134</name>
</gene>